<gene>
    <name evidence="1" type="primary">ndhJ</name>
</gene>
<proteinExistence type="inferred from homology"/>
<dbReference type="EC" id="7.1.1.-" evidence="1"/>
<dbReference type="EMBL" id="DQ887677">
    <property type="protein sequence ID" value="ABI14475.1"/>
    <property type="molecule type" value="Genomic_DNA"/>
</dbReference>
<dbReference type="RefSeq" id="YP_784476.1">
    <property type="nucleotide sequence ID" value="NC_008457.1"/>
</dbReference>
<dbReference type="SMR" id="Q06GQ7"/>
<dbReference type="GeneID" id="4363746"/>
<dbReference type="GO" id="GO:0009535">
    <property type="term" value="C:chloroplast thylakoid membrane"/>
    <property type="evidence" value="ECO:0007669"/>
    <property type="project" value="UniProtKB-SubCell"/>
</dbReference>
<dbReference type="GO" id="GO:0008137">
    <property type="term" value="F:NADH dehydrogenase (ubiquinone) activity"/>
    <property type="evidence" value="ECO:0007669"/>
    <property type="project" value="InterPro"/>
</dbReference>
<dbReference type="GO" id="GO:0048038">
    <property type="term" value="F:quinone binding"/>
    <property type="evidence" value="ECO:0007669"/>
    <property type="project" value="UniProtKB-KW"/>
</dbReference>
<dbReference type="GO" id="GO:0019684">
    <property type="term" value="P:photosynthesis, light reaction"/>
    <property type="evidence" value="ECO:0007669"/>
    <property type="project" value="UniProtKB-UniRule"/>
</dbReference>
<dbReference type="FunFam" id="3.30.460.80:FF:000004">
    <property type="entry name" value="NAD(P)H-quinone oxidoreductase subunit J, chloroplastic"/>
    <property type="match status" value="1"/>
</dbReference>
<dbReference type="Gene3D" id="3.30.460.80">
    <property type="entry name" value="NADH:ubiquinone oxidoreductase, 30kDa subunit"/>
    <property type="match status" value="1"/>
</dbReference>
<dbReference type="HAMAP" id="MF_01357">
    <property type="entry name" value="NDH1_NuoC"/>
    <property type="match status" value="1"/>
</dbReference>
<dbReference type="InterPro" id="IPR010218">
    <property type="entry name" value="NADH_DH_suC"/>
</dbReference>
<dbReference type="InterPro" id="IPR037232">
    <property type="entry name" value="NADH_quin_OxRdtase_su_C/D-like"/>
</dbReference>
<dbReference type="InterPro" id="IPR001268">
    <property type="entry name" value="NADH_UbQ_OxRdtase_30kDa_su"/>
</dbReference>
<dbReference type="InterPro" id="IPR020396">
    <property type="entry name" value="NADH_UbQ_OxRdtase_CS"/>
</dbReference>
<dbReference type="NCBIfam" id="NF009141">
    <property type="entry name" value="PRK12494.1"/>
    <property type="match status" value="1"/>
</dbReference>
<dbReference type="PANTHER" id="PTHR10884:SF14">
    <property type="entry name" value="NADH DEHYDROGENASE [UBIQUINONE] IRON-SULFUR PROTEIN 3, MITOCHONDRIAL"/>
    <property type="match status" value="1"/>
</dbReference>
<dbReference type="PANTHER" id="PTHR10884">
    <property type="entry name" value="NADH DEHYDROGENASE UBIQUINONE IRON-SULFUR PROTEIN 3"/>
    <property type="match status" value="1"/>
</dbReference>
<dbReference type="Pfam" id="PF00329">
    <property type="entry name" value="Complex1_30kDa"/>
    <property type="match status" value="1"/>
</dbReference>
<dbReference type="SUPFAM" id="SSF143243">
    <property type="entry name" value="Nqo5-like"/>
    <property type="match status" value="1"/>
</dbReference>
<dbReference type="PROSITE" id="PS00542">
    <property type="entry name" value="COMPLEX1_30K"/>
    <property type="match status" value="1"/>
</dbReference>
<protein>
    <recommendedName>
        <fullName evidence="1">NAD(P)H-quinone oxidoreductase subunit J, chloroplastic</fullName>
        <ecNumber evidence="1">7.1.1.-</ecNumber>
    </recommendedName>
    <alternativeName>
        <fullName>NAD(P)H dehydrogenase subunit J</fullName>
    </alternativeName>
    <alternativeName>
        <fullName evidence="1">NADH-plastoquinone oxidoreductase subunit J</fullName>
    </alternativeName>
</protein>
<evidence type="ECO:0000255" key="1">
    <source>
        <dbReference type="HAMAP-Rule" id="MF_01357"/>
    </source>
</evidence>
<comment type="function">
    <text evidence="1">NDH shuttles electrons from NAD(P)H:plastoquinone, via FMN and iron-sulfur (Fe-S) centers, to quinones in the photosynthetic chain and possibly in a chloroplast respiratory chain. The immediate electron acceptor for the enzyme in this species is believed to be plastoquinone. Couples the redox reaction to proton translocation, and thus conserves the redox energy in a proton gradient.</text>
</comment>
<comment type="catalytic activity">
    <reaction evidence="1">
        <text>a plastoquinone + NADH + (n+1) H(+)(in) = a plastoquinol + NAD(+) + n H(+)(out)</text>
        <dbReference type="Rhea" id="RHEA:42608"/>
        <dbReference type="Rhea" id="RHEA-COMP:9561"/>
        <dbReference type="Rhea" id="RHEA-COMP:9562"/>
        <dbReference type="ChEBI" id="CHEBI:15378"/>
        <dbReference type="ChEBI" id="CHEBI:17757"/>
        <dbReference type="ChEBI" id="CHEBI:57540"/>
        <dbReference type="ChEBI" id="CHEBI:57945"/>
        <dbReference type="ChEBI" id="CHEBI:62192"/>
    </reaction>
</comment>
<comment type="catalytic activity">
    <reaction evidence="1">
        <text>a plastoquinone + NADPH + (n+1) H(+)(in) = a plastoquinol + NADP(+) + n H(+)(out)</text>
        <dbReference type="Rhea" id="RHEA:42612"/>
        <dbReference type="Rhea" id="RHEA-COMP:9561"/>
        <dbReference type="Rhea" id="RHEA-COMP:9562"/>
        <dbReference type="ChEBI" id="CHEBI:15378"/>
        <dbReference type="ChEBI" id="CHEBI:17757"/>
        <dbReference type="ChEBI" id="CHEBI:57783"/>
        <dbReference type="ChEBI" id="CHEBI:58349"/>
        <dbReference type="ChEBI" id="CHEBI:62192"/>
    </reaction>
</comment>
<comment type="subunit">
    <text evidence="1">NDH is composed of at least 16 different subunits, 5 of which are encoded in the nucleus.</text>
</comment>
<comment type="subcellular location">
    <subcellularLocation>
        <location evidence="1">Plastid</location>
        <location evidence="1">Chloroplast thylakoid membrane</location>
        <topology evidence="1">Peripheral membrane protein</topology>
        <orientation evidence="1">Stromal side</orientation>
    </subcellularLocation>
</comment>
<comment type="similarity">
    <text evidence="1">Belongs to the complex I 30 kDa subunit family.</text>
</comment>
<organism>
    <name type="scientific">Piper cenocladum</name>
    <name type="common">Ant piper</name>
    <dbReference type="NCBI Taxonomy" id="398741"/>
    <lineage>
        <taxon>Eukaryota</taxon>
        <taxon>Viridiplantae</taxon>
        <taxon>Streptophyta</taxon>
        <taxon>Embryophyta</taxon>
        <taxon>Tracheophyta</taxon>
        <taxon>Spermatophyta</taxon>
        <taxon>Magnoliopsida</taxon>
        <taxon>Magnoliidae</taxon>
        <taxon>Piperales</taxon>
        <taxon>Piperaceae</taxon>
        <taxon>Piper</taxon>
    </lineage>
</organism>
<geneLocation type="chloroplast"/>
<reference key="1">
    <citation type="journal article" date="2006" name="BMC Evol. Biol.">
        <title>Complete plastid genome sequences of Drimys, Liriodendron, and Piper: implications for the phylogenetic relationships of magnoliids.</title>
        <authorList>
            <person name="Cai Z."/>
            <person name="Penaflor C."/>
            <person name="Kuehl J.V."/>
            <person name="Leebens-Mack J."/>
            <person name="Carlson J.E."/>
            <person name="dePamphilis C.W."/>
            <person name="Boore J.L."/>
            <person name="Jansen R.K."/>
        </authorList>
    </citation>
    <scope>NUCLEOTIDE SEQUENCE [LARGE SCALE GENOMIC DNA]</scope>
</reference>
<keyword id="KW-0150">Chloroplast</keyword>
<keyword id="KW-0472">Membrane</keyword>
<keyword id="KW-0520">NAD</keyword>
<keyword id="KW-0521">NADP</keyword>
<keyword id="KW-0934">Plastid</keyword>
<keyword id="KW-0618">Plastoquinone</keyword>
<keyword id="KW-0874">Quinone</keyword>
<keyword id="KW-0793">Thylakoid</keyword>
<keyword id="KW-1278">Translocase</keyword>
<keyword id="KW-0813">Transport</keyword>
<sequence length="158" mass="18655">MQGRLSAWLVKHELVHRSLGFDYRGIETLQIKSEDWYSIAVILYAYGYNYLRSQCAYDAAPGGLLASVYHLTRIQYGIDQPEEVCIKVFVPRTNTRIPSVFWIWKSADFQERESYDMLGISYENHPRLKRILMPESWIGWPLRKDYIAPNFYEIQDAH</sequence>
<feature type="chain" id="PRO_0000358298" description="NAD(P)H-quinone oxidoreductase subunit J, chloroplastic">
    <location>
        <begin position="1"/>
        <end position="158"/>
    </location>
</feature>
<accession>Q06GQ7</accession>
<name>NDHJ_PIPCE</name>